<feature type="signal peptide" evidence="2">
    <location>
        <begin position="1"/>
        <end position="18"/>
    </location>
</feature>
<feature type="propeptide" id="PRO_0000401043" evidence="1">
    <location>
        <begin position="19"/>
        <end position="46"/>
    </location>
</feature>
<feature type="peptide" id="PRO_0000401044" description="Hainantoxin-XVIII-4">
    <location>
        <begin position="47"/>
        <end position="109"/>
    </location>
</feature>
<feature type="disulfide bond" evidence="1">
    <location>
        <begin position="55"/>
        <end position="68"/>
    </location>
</feature>
<feature type="disulfide bond" evidence="1">
    <location>
        <begin position="59"/>
        <end position="108"/>
    </location>
</feature>
<feature type="disulfide bond" evidence="1">
    <location>
        <begin position="61"/>
        <end position="81"/>
    </location>
</feature>
<name>H18D1_CYRHA</name>
<organism>
    <name type="scientific">Cyriopagopus hainanus</name>
    <name type="common">Chinese bird spider</name>
    <name type="synonym">Haplopelma hainanum</name>
    <dbReference type="NCBI Taxonomy" id="209901"/>
    <lineage>
        <taxon>Eukaryota</taxon>
        <taxon>Metazoa</taxon>
        <taxon>Ecdysozoa</taxon>
        <taxon>Arthropoda</taxon>
        <taxon>Chelicerata</taxon>
        <taxon>Arachnida</taxon>
        <taxon>Araneae</taxon>
        <taxon>Mygalomorphae</taxon>
        <taxon>Theraphosidae</taxon>
        <taxon>Haplopelma</taxon>
    </lineage>
</organism>
<keyword id="KW-1015">Disulfide bond</keyword>
<keyword id="KW-0872">Ion channel impairing toxin</keyword>
<keyword id="KW-0960">Knottin</keyword>
<keyword id="KW-0964">Secreted</keyword>
<keyword id="KW-0732">Signal</keyword>
<keyword id="KW-0800">Toxin</keyword>
<accession>D2Y2H2</accession>
<sequence length="109" mass="11879">MKLSIIIIATSLVIAVVAFPSKDSKAIENDKTEQRMEIVVQETARACSKQIGDKCKRNCECYGKTVVCGTIYVGGKEVNQCMDKTSDSAILNGLGKGMNFIENTFSFCV</sequence>
<reference key="1">
    <citation type="journal article" date="2010" name="J. Proteome Res.">
        <title>Molecular diversification of peptide toxins from the tarantula Haplopelma hainanum (Ornithoctonus hainana) venom based on transcriptomic, peptidomic, and genomic analyses.</title>
        <authorList>
            <person name="Tang X."/>
            <person name="Zhang Y."/>
            <person name="Hu W."/>
            <person name="Xu D."/>
            <person name="Tao H."/>
            <person name="Yang X."/>
            <person name="Li Y."/>
            <person name="Jiang L."/>
            <person name="Liang S."/>
        </authorList>
    </citation>
    <scope>NUCLEOTIDE SEQUENCE [LARGE SCALE MRNA]</scope>
    <source>
        <tissue>Venom gland</tissue>
    </source>
</reference>
<dbReference type="EMBL" id="GU293049">
    <property type="protein sequence ID" value="ADB56865.1"/>
    <property type="molecule type" value="mRNA"/>
</dbReference>
<dbReference type="ArachnoServer" id="AS001652">
    <property type="toxin name" value="U14-theraphotoxin-Hhn1d"/>
</dbReference>
<dbReference type="GO" id="GO:0005576">
    <property type="term" value="C:extracellular region"/>
    <property type="evidence" value="ECO:0007669"/>
    <property type="project" value="UniProtKB-SubCell"/>
</dbReference>
<dbReference type="GO" id="GO:0099106">
    <property type="term" value="F:ion channel regulator activity"/>
    <property type="evidence" value="ECO:0007669"/>
    <property type="project" value="UniProtKB-KW"/>
</dbReference>
<dbReference type="GO" id="GO:0090729">
    <property type="term" value="F:toxin activity"/>
    <property type="evidence" value="ECO:0007669"/>
    <property type="project" value="UniProtKB-KW"/>
</dbReference>
<comment type="function">
    <text>Putative ion channel inhibitor.</text>
</comment>
<comment type="subcellular location">
    <subcellularLocation>
        <location evidence="1">Secreted</location>
    </subcellularLocation>
</comment>
<comment type="tissue specificity">
    <text>Expressed by the venom gland.</text>
</comment>
<comment type="domain">
    <text evidence="1">The presence of a 'disulfide through disulfide knot' structurally defines this protein as a knottin.</text>
</comment>
<comment type="similarity">
    <text>Belongs to the neurotoxin 25 family. F7 subfamily.</text>
</comment>
<proteinExistence type="evidence at transcript level"/>
<evidence type="ECO:0000250" key="1"/>
<evidence type="ECO:0000255" key="2"/>
<protein>
    <recommendedName>
        <fullName>Hainantoxin-XVIII-4</fullName>
        <shortName>HNTX-XVIII-4</shortName>
    </recommendedName>
</protein>